<dbReference type="EC" id="2.7.4.16" evidence="1"/>
<dbReference type="EMBL" id="AJ248284">
    <property type="protein sequence ID" value="CAB49311.1"/>
    <property type="molecule type" value="Genomic_DNA"/>
</dbReference>
<dbReference type="EMBL" id="HE613800">
    <property type="protein sequence ID" value="CCE69767.1"/>
    <property type="molecule type" value="Genomic_DNA"/>
</dbReference>
<dbReference type="PIR" id="H75153">
    <property type="entry name" value="H75153"/>
</dbReference>
<dbReference type="SMR" id="Q9V1N8"/>
<dbReference type="STRING" id="272844.PAB2358"/>
<dbReference type="KEGG" id="pab:PAB2358"/>
<dbReference type="PATRIC" id="fig|272844.11.peg.410"/>
<dbReference type="eggNOG" id="arCOG00638">
    <property type="taxonomic scope" value="Archaea"/>
</dbReference>
<dbReference type="HOGENOM" id="CLU_046964_2_0_2"/>
<dbReference type="OrthoDB" id="45909at2157"/>
<dbReference type="PhylomeDB" id="Q9V1N8"/>
<dbReference type="UniPathway" id="UPA00060">
    <property type="reaction ID" value="UER00142"/>
</dbReference>
<dbReference type="Proteomes" id="UP000000810">
    <property type="component" value="Chromosome"/>
</dbReference>
<dbReference type="Proteomes" id="UP000009139">
    <property type="component" value="Chromosome"/>
</dbReference>
<dbReference type="GO" id="GO:0005524">
    <property type="term" value="F:ATP binding"/>
    <property type="evidence" value="ECO:0007669"/>
    <property type="project" value="UniProtKB-UniRule"/>
</dbReference>
<dbReference type="GO" id="GO:0000287">
    <property type="term" value="F:magnesium ion binding"/>
    <property type="evidence" value="ECO:0007669"/>
    <property type="project" value="UniProtKB-UniRule"/>
</dbReference>
<dbReference type="GO" id="GO:0009030">
    <property type="term" value="F:thiamine-phosphate kinase activity"/>
    <property type="evidence" value="ECO:0007669"/>
    <property type="project" value="UniProtKB-UniRule"/>
</dbReference>
<dbReference type="GO" id="GO:0009228">
    <property type="term" value="P:thiamine biosynthetic process"/>
    <property type="evidence" value="ECO:0007669"/>
    <property type="project" value="UniProtKB-KW"/>
</dbReference>
<dbReference type="GO" id="GO:0009229">
    <property type="term" value="P:thiamine diphosphate biosynthetic process"/>
    <property type="evidence" value="ECO:0007669"/>
    <property type="project" value="UniProtKB-UniRule"/>
</dbReference>
<dbReference type="CDD" id="cd02194">
    <property type="entry name" value="ThiL"/>
    <property type="match status" value="1"/>
</dbReference>
<dbReference type="Gene3D" id="3.90.650.10">
    <property type="entry name" value="PurM-like C-terminal domain"/>
    <property type="match status" value="1"/>
</dbReference>
<dbReference type="Gene3D" id="3.30.1330.10">
    <property type="entry name" value="PurM-like, N-terminal domain"/>
    <property type="match status" value="1"/>
</dbReference>
<dbReference type="HAMAP" id="MF_02128">
    <property type="entry name" value="TMP_kinase"/>
    <property type="match status" value="1"/>
</dbReference>
<dbReference type="InterPro" id="IPR010918">
    <property type="entry name" value="PurM-like_C_dom"/>
</dbReference>
<dbReference type="InterPro" id="IPR036676">
    <property type="entry name" value="PurM-like_C_sf"/>
</dbReference>
<dbReference type="InterPro" id="IPR016188">
    <property type="entry name" value="PurM-like_N"/>
</dbReference>
<dbReference type="InterPro" id="IPR036921">
    <property type="entry name" value="PurM-like_N_sf"/>
</dbReference>
<dbReference type="InterPro" id="IPR006283">
    <property type="entry name" value="ThiL-like"/>
</dbReference>
<dbReference type="NCBIfam" id="NF004353">
    <property type="entry name" value="PRK05731.2-2"/>
    <property type="match status" value="1"/>
</dbReference>
<dbReference type="NCBIfam" id="TIGR01379">
    <property type="entry name" value="thiL"/>
    <property type="match status" value="1"/>
</dbReference>
<dbReference type="PANTHER" id="PTHR30270">
    <property type="entry name" value="THIAMINE-MONOPHOSPHATE KINASE"/>
    <property type="match status" value="1"/>
</dbReference>
<dbReference type="PANTHER" id="PTHR30270:SF3">
    <property type="entry name" value="THIAMINE-MONOPHOSPHATE KINASE"/>
    <property type="match status" value="1"/>
</dbReference>
<dbReference type="Pfam" id="PF00586">
    <property type="entry name" value="AIRS"/>
    <property type="match status" value="1"/>
</dbReference>
<dbReference type="Pfam" id="PF02769">
    <property type="entry name" value="AIRS_C"/>
    <property type="match status" value="1"/>
</dbReference>
<dbReference type="PIRSF" id="PIRSF005303">
    <property type="entry name" value="Thiam_monoph_kin"/>
    <property type="match status" value="1"/>
</dbReference>
<dbReference type="SUPFAM" id="SSF56042">
    <property type="entry name" value="PurM C-terminal domain-like"/>
    <property type="match status" value="1"/>
</dbReference>
<dbReference type="SUPFAM" id="SSF55326">
    <property type="entry name" value="PurM N-terminal domain-like"/>
    <property type="match status" value="1"/>
</dbReference>
<proteinExistence type="inferred from homology"/>
<evidence type="ECO:0000255" key="1">
    <source>
        <dbReference type="HAMAP-Rule" id="MF_02128"/>
    </source>
</evidence>
<keyword id="KW-0067">ATP-binding</keyword>
<keyword id="KW-0418">Kinase</keyword>
<keyword id="KW-0460">Magnesium</keyword>
<keyword id="KW-0479">Metal-binding</keyword>
<keyword id="KW-0547">Nucleotide-binding</keyword>
<keyword id="KW-0784">Thiamine biosynthesis</keyword>
<keyword id="KW-0808">Transferase</keyword>
<gene>
    <name evidence="1" type="primary">thiL</name>
    <name type="ordered locus">PYRAB03890</name>
    <name type="ORF">PAB2358</name>
</gene>
<reference key="1">
    <citation type="journal article" date="2003" name="Mol. Microbiol.">
        <title>An integrated analysis of the genome of the hyperthermophilic archaeon Pyrococcus abyssi.</title>
        <authorList>
            <person name="Cohen G.N."/>
            <person name="Barbe V."/>
            <person name="Flament D."/>
            <person name="Galperin M."/>
            <person name="Heilig R."/>
            <person name="Lecompte O."/>
            <person name="Poch O."/>
            <person name="Prieur D."/>
            <person name="Querellou J."/>
            <person name="Ripp R."/>
            <person name="Thierry J.-C."/>
            <person name="Van der Oost J."/>
            <person name="Weissenbach J."/>
            <person name="Zivanovic Y."/>
            <person name="Forterre P."/>
        </authorList>
    </citation>
    <scope>NUCLEOTIDE SEQUENCE [LARGE SCALE GENOMIC DNA]</scope>
    <source>
        <strain>GE5 / Orsay</strain>
    </source>
</reference>
<reference key="2">
    <citation type="journal article" date="2012" name="Curr. Microbiol.">
        <title>Re-annotation of two hyperthermophilic archaea Pyrococcus abyssi GE5 and Pyrococcus furiosus DSM 3638.</title>
        <authorList>
            <person name="Gao J."/>
            <person name="Wang J."/>
        </authorList>
    </citation>
    <scope>GENOME REANNOTATION</scope>
    <source>
        <strain>GE5 / Orsay</strain>
    </source>
</reference>
<name>THIL_PYRAB</name>
<sequence>MVVSMREGEIISLFMKHFERHSLGDDAGFIKLNNSWLLVTSDMLVWKTDVPDFMTPEDAGRKVVTMNVSDIAAMGGRPMAFFFSLAVPGDVSEDILRGIARGINEGSKVYKLKIVSGDTNEADDIIIDGGSLGIGKRLLLRSNAKPGDLVCVTGDLGRPLTALLLWMRGEKIPREIEEKARNPRARVEEGVKLSSLANSAIDISDGLSKELWEIANASNVRIIIEEERLPISDSVKEIVSDPVKVALASGEEFELLFTIPREKVEELDIDFKIIGRVEGGNGVYIKRGRKIEELEVLGWEHLAGGIDVEL</sequence>
<comment type="function">
    <text evidence="1">Catalyzes the ATP-dependent phosphorylation of thiamine-monophosphate (TMP) to form thiamine-pyrophosphate (TPP), the active form of vitamin B1.</text>
</comment>
<comment type="catalytic activity">
    <reaction evidence="1">
        <text>thiamine phosphate + ATP = thiamine diphosphate + ADP</text>
        <dbReference type="Rhea" id="RHEA:15913"/>
        <dbReference type="ChEBI" id="CHEBI:30616"/>
        <dbReference type="ChEBI" id="CHEBI:37575"/>
        <dbReference type="ChEBI" id="CHEBI:58937"/>
        <dbReference type="ChEBI" id="CHEBI:456216"/>
        <dbReference type="EC" id="2.7.4.16"/>
    </reaction>
</comment>
<comment type="pathway">
    <text evidence="1">Cofactor biosynthesis; thiamine diphosphate biosynthesis; thiamine diphosphate from thiamine phosphate: step 1/1.</text>
</comment>
<comment type="miscellaneous">
    <text evidence="1">Reaction mechanism of ThiL seems to utilize a direct, inline transfer of the gamma-phosphate of ATP to TMP rather than a phosphorylated enzyme intermediate.</text>
</comment>
<comment type="similarity">
    <text evidence="1">Belongs to the thiamine-monophosphate kinase family.</text>
</comment>
<protein>
    <recommendedName>
        <fullName evidence="1">Thiamine-monophosphate kinase</fullName>
        <shortName evidence="1">TMP kinase</shortName>
        <shortName evidence="1">Thiamine-phosphate kinase</shortName>
        <ecNumber evidence="1">2.7.4.16</ecNumber>
    </recommendedName>
</protein>
<feature type="chain" id="PRO_0000096203" description="Thiamine-monophosphate kinase">
    <location>
        <begin position="1"/>
        <end position="310"/>
    </location>
</feature>
<feature type="binding site" evidence="1">
    <location>
        <position position="26"/>
    </location>
    <ligand>
        <name>Mg(2+)</name>
        <dbReference type="ChEBI" id="CHEBI:18420"/>
        <label>3</label>
    </ligand>
</feature>
<feature type="binding site" evidence="1">
    <location>
        <position position="26"/>
    </location>
    <ligand>
        <name>Mg(2+)</name>
        <dbReference type="ChEBI" id="CHEBI:18420"/>
        <label>4</label>
    </ligand>
</feature>
<feature type="binding site" evidence="1">
    <location>
        <position position="40"/>
    </location>
    <ligand>
        <name>Mg(2+)</name>
        <dbReference type="ChEBI" id="CHEBI:18420"/>
        <label>4</label>
    </ligand>
</feature>
<feature type="binding site" evidence="1">
    <location>
        <position position="41"/>
    </location>
    <ligand>
        <name>Mg(2+)</name>
        <dbReference type="ChEBI" id="CHEBI:18420"/>
        <label>1</label>
    </ligand>
</feature>
<feature type="binding site" evidence="1">
    <location>
        <position position="42"/>
    </location>
    <ligand>
        <name>Mg(2+)</name>
        <dbReference type="ChEBI" id="CHEBI:18420"/>
        <label>1</label>
    </ligand>
</feature>
<feature type="binding site" evidence="1">
    <location>
        <position position="42"/>
    </location>
    <ligand>
        <name>Mg(2+)</name>
        <dbReference type="ChEBI" id="CHEBI:18420"/>
        <label>2</label>
    </ligand>
</feature>
<feature type="binding site" evidence="1">
    <location>
        <position position="49"/>
    </location>
    <ligand>
        <name>substrate</name>
    </ligand>
</feature>
<feature type="binding site" evidence="1">
    <location>
        <position position="70"/>
    </location>
    <ligand>
        <name>Mg(2+)</name>
        <dbReference type="ChEBI" id="CHEBI:18420"/>
        <label>2</label>
    </ligand>
</feature>
<feature type="binding site" evidence="1">
    <location>
        <position position="70"/>
    </location>
    <ligand>
        <name>Mg(2+)</name>
        <dbReference type="ChEBI" id="CHEBI:18420"/>
        <label>3</label>
    </ligand>
</feature>
<feature type="binding site" evidence="1">
    <location>
        <position position="70"/>
    </location>
    <ligand>
        <name>Mg(2+)</name>
        <dbReference type="ChEBI" id="CHEBI:18420"/>
        <label>4</label>
    </ligand>
</feature>
<feature type="binding site" evidence="1">
    <location>
        <begin position="117"/>
        <end position="118"/>
    </location>
    <ligand>
        <name>ATP</name>
        <dbReference type="ChEBI" id="CHEBI:30616"/>
    </ligand>
</feature>
<feature type="binding site" evidence="1">
    <location>
        <position position="118"/>
    </location>
    <ligand>
        <name>Mg(2+)</name>
        <dbReference type="ChEBI" id="CHEBI:18420"/>
        <label>1</label>
    </ligand>
</feature>
<feature type="binding site" evidence="1">
    <location>
        <position position="141"/>
    </location>
    <ligand>
        <name>ATP</name>
        <dbReference type="ChEBI" id="CHEBI:30616"/>
    </ligand>
</feature>
<feature type="binding site" evidence="1">
    <location>
        <position position="202"/>
    </location>
    <ligand>
        <name>Mg(2+)</name>
        <dbReference type="ChEBI" id="CHEBI:18420"/>
        <label>3</label>
    </ligand>
</feature>
<feature type="binding site" evidence="1">
    <location>
        <position position="204"/>
    </location>
    <ligand>
        <name>ATP</name>
        <dbReference type="ChEBI" id="CHEBI:30616"/>
    </ligand>
</feature>
<feature type="binding site" evidence="1">
    <location>
        <position position="205"/>
    </location>
    <ligand>
        <name>Mg(2+)</name>
        <dbReference type="ChEBI" id="CHEBI:18420"/>
        <label>5</label>
    </ligand>
</feature>
<feature type="binding site" evidence="1">
    <location>
        <position position="251"/>
    </location>
    <ligand>
        <name>substrate</name>
    </ligand>
</feature>
<feature type="binding site" evidence="1">
    <location>
        <position position="299"/>
    </location>
    <ligand>
        <name>substrate</name>
    </ligand>
</feature>
<organism>
    <name type="scientific">Pyrococcus abyssi (strain GE5 / Orsay)</name>
    <dbReference type="NCBI Taxonomy" id="272844"/>
    <lineage>
        <taxon>Archaea</taxon>
        <taxon>Methanobacteriati</taxon>
        <taxon>Methanobacteriota</taxon>
        <taxon>Thermococci</taxon>
        <taxon>Thermococcales</taxon>
        <taxon>Thermococcaceae</taxon>
        <taxon>Pyrococcus</taxon>
    </lineage>
</organism>
<accession>Q9V1N8</accession>
<accession>G8ZI24</accession>